<gene>
    <name type="ordered locus">MK0012</name>
</gene>
<evidence type="ECO:0000305" key="1"/>
<name>Y012_METKA</name>
<dbReference type="EMBL" id="AE009439">
    <property type="protein sequence ID" value="AAM01229.1"/>
    <property type="molecule type" value="Genomic_DNA"/>
</dbReference>
<dbReference type="RefSeq" id="WP_011018384.1">
    <property type="nucleotide sequence ID" value="NC_003551.1"/>
</dbReference>
<dbReference type="SMR" id="Q8TZC1"/>
<dbReference type="STRING" id="190192.MK0012"/>
<dbReference type="PaxDb" id="190192-MK0012"/>
<dbReference type="EnsemblBacteria" id="AAM01229">
    <property type="protein sequence ID" value="AAM01229"/>
    <property type="gene ID" value="MK0012"/>
</dbReference>
<dbReference type="GeneID" id="1477314"/>
<dbReference type="KEGG" id="mka:MK0012"/>
<dbReference type="PATRIC" id="fig|190192.8.peg.11"/>
<dbReference type="HOGENOM" id="CLU_1451416_0_0_2"/>
<dbReference type="InParanoid" id="Q8TZC1"/>
<dbReference type="OrthoDB" id="59686at2157"/>
<dbReference type="Proteomes" id="UP000001826">
    <property type="component" value="Chromosome"/>
</dbReference>
<dbReference type="HAMAP" id="MF_00673">
    <property type="entry name" value="UPF0254"/>
    <property type="match status" value="1"/>
</dbReference>
<dbReference type="InterPro" id="IPR009625">
    <property type="entry name" value="HcgF"/>
</dbReference>
<dbReference type="NCBIfam" id="NF002122">
    <property type="entry name" value="PRK00962.1"/>
    <property type="match status" value="1"/>
</dbReference>
<dbReference type="Pfam" id="PF06787">
    <property type="entry name" value="HcgF"/>
    <property type="match status" value="1"/>
</dbReference>
<dbReference type="PIRSF" id="PIRSF018786">
    <property type="entry name" value="UPF0254"/>
    <property type="match status" value="1"/>
</dbReference>
<comment type="similarity">
    <text evidence="1">Belongs to the UPF0254 family.</text>
</comment>
<sequence>MLRVATAECFTHGFVGREIHASASGYTGELGSEILGTELEGKVSVVAACFIPTVSGLRSLLGIDPPEPDEVSKSGAKAYREETDRKVAVMMARAVRERTGADVGIGTTAGIGRGAICLDDGEITLLGRTDVHANLLKPDERIRKRQLQGIKRSLVMFRAYFRCELDELLEEEWVEEVTRDLP</sequence>
<reference key="1">
    <citation type="journal article" date="2002" name="Proc. Natl. Acad. Sci. U.S.A.">
        <title>The complete genome of hyperthermophile Methanopyrus kandleri AV19 and monophyly of archaeal methanogens.</title>
        <authorList>
            <person name="Slesarev A.I."/>
            <person name="Mezhevaya K.V."/>
            <person name="Makarova K.S."/>
            <person name="Polushin N.N."/>
            <person name="Shcherbinina O.V."/>
            <person name="Shakhova V.V."/>
            <person name="Belova G.I."/>
            <person name="Aravind L."/>
            <person name="Natale D.A."/>
            <person name="Rogozin I.B."/>
            <person name="Tatusov R.L."/>
            <person name="Wolf Y.I."/>
            <person name="Stetter K.O."/>
            <person name="Malykh A.G."/>
            <person name="Koonin E.V."/>
            <person name="Kozyavkin S.A."/>
        </authorList>
    </citation>
    <scope>NUCLEOTIDE SEQUENCE [LARGE SCALE GENOMIC DNA]</scope>
    <source>
        <strain>AV19 / DSM 6324 / JCM 9639 / NBRC 100938</strain>
    </source>
</reference>
<keyword id="KW-1185">Reference proteome</keyword>
<feature type="chain" id="PRO_0000147368" description="UPF0254 protein MK0012">
    <location>
        <begin position="1"/>
        <end position="182"/>
    </location>
</feature>
<organism>
    <name type="scientific">Methanopyrus kandleri (strain AV19 / DSM 6324 / JCM 9639 / NBRC 100938)</name>
    <dbReference type="NCBI Taxonomy" id="190192"/>
    <lineage>
        <taxon>Archaea</taxon>
        <taxon>Methanobacteriati</taxon>
        <taxon>Methanobacteriota</taxon>
        <taxon>Methanomada group</taxon>
        <taxon>Methanopyri</taxon>
        <taxon>Methanopyrales</taxon>
        <taxon>Methanopyraceae</taxon>
        <taxon>Methanopyrus</taxon>
    </lineage>
</organism>
<accession>Q8TZC1</accession>
<proteinExistence type="inferred from homology"/>
<protein>
    <recommendedName>
        <fullName>UPF0254 protein MK0012</fullName>
    </recommendedName>
</protein>